<accession>Q8LPK0</accession>
<accession>Q9STT4</accession>
<sequence>MADSSPASFLTQADALLRKNLVFQKRNIWSNIRLITIPFFLCLLLLVIQMLFDTQFNDVHGQCGCNEKTCGLRYSTSEQAAFCAIPNPPQWTPLLQIPAPEYRAAIPYPSHTSPATFLFTGNNQSLGNILMGNMYSNSSGFDGDLAYYVLGSSSFPAYTNHMDSAFISDLPIYNIQHECSPNSSFSILIHQSPLAFPKEVNCVQGLNLWRNSSSDVNNELFKGYRKGNPDKKINEFAGAFDFQNTNGNNLNVSVWYNSTYKNDTVVRPMALIRVPRLVNLASNAYLEFLKGSETKILFEYVKEMPKPETKLSLDIASLIGPLFFTWVILLLFPVILTTLVYEKQQRLRIMMKMHGLGDVPYWIVSYTYFLLISILYMLCFAIFGSLIGLNFFRLNDYSIQLVFFFICINLQISVAFLASAMFSDVKTATVIAYIYVFGTGLLGIFLFQFFLEDPLFPRGWIIAMELYPGFSLYRGLYELSQSAFAGDYRGIDGMKWRDFGNGMKEVTCIMLIEWLLLLGLAYYIDQIIYSRKHPLFFLLQSTSKKKQHFSDNKISKVVVEMEKPDVCREREKVEQCLLKSTRDSAVLCNNLKKVYSGKDGNPQKLAVRGLSLALPQGECFGMLGPNGAGKTSFINMMTGIIKPSSGTAFVQGLDILTDMDRIYTTIGVCPQHDLLWEKLSGREHLLFYGRLKNLKGSVLTQAVEESLRSVNLFHGGIGDKQVSKYSGGMKRRLSVAISLIGSPKVVYMDEPSTGLDPASRKSLWDVVKRAKRKGAIILTTHSMEEAEILCDRIGIFVDGSLQCIGNPKELKSRYGGSYVLTVTTSEEHEKEVEQLVHNISTNAKKIYRTAGTQKFELPKQEVKIGEVFKALEKAKTMFPVVAWGLADTTLEDVFIKVAQTS</sequence>
<evidence type="ECO:0000255" key="1"/>
<evidence type="ECO:0000255" key="2">
    <source>
        <dbReference type="PROSITE-ProRule" id="PRU00434"/>
    </source>
</evidence>
<evidence type="ECO:0000305" key="3"/>
<keyword id="KW-0067">ATP-binding</keyword>
<keyword id="KW-0472">Membrane</keyword>
<keyword id="KW-0547">Nucleotide-binding</keyword>
<keyword id="KW-1185">Reference proteome</keyword>
<keyword id="KW-0812">Transmembrane</keyword>
<keyword id="KW-1133">Transmembrane helix</keyword>
<keyword id="KW-0813">Transport</keyword>
<proteinExistence type="evidence at transcript level"/>
<feature type="chain" id="PRO_0000240329" description="ABC transporter A family member 8">
    <location>
        <begin position="1"/>
        <end position="901"/>
    </location>
</feature>
<feature type="transmembrane region" description="Helical" evidence="1">
    <location>
        <begin position="34"/>
        <end position="54"/>
    </location>
</feature>
<feature type="transmembrane region" description="Helical" evidence="1">
    <location>
        <begin position="315"/>
        <end position="335"/>
    </location>
</feature>
<feature type="transmembrane region" description="Helical" evidence="1">
    <location>
        <begin position="369"/>
        <end position="389"/>
    </location>
</feature>
<feature type="transmembrane region" description="Helical" evidence="1">
    <location>
        <begin position="402"/>
        <end position="422"/>
    </location>
</feature>
<feature type="transmembrane region" description="Helical" evidence="1">
    <location>
        <begin position="427"/>
        <end position="447"/>
    </location>
</feature>
<feature type="transmembrane region" description="Helical" evidence="1">
    <location>
        <begin position="460"/>
        <end position="477"/>
    </location>
</feature>
<feature type="transmembrane region" description="Helical" evidence="1">
    <location>
        <begin position="508"/>
        <end position="528"/>
    </location>
</feature>
<feature type="domain" description="ABC transporter" evidence="2">
    <location>
        <begin position="586"/>
        <end position="823"/>
    </location>
</feature>
<feature type="binding site" evidence="2">
    <location>
        <begin position="624"/>
        <end position="631"/>
    </location>
    <ligand>
        <name>ATP</name>
        <dbReference type="ChEBI" id="CHEBI:30616"/>
    </ligand>
</feature>
<feature type="sequence conflict" description="In Ref. 1; CAB41862." evidence="3" ref="1">
    <original>T</original>
    <variation>I</variation>
    <location>
        <position position="427"/>
    </location>
</feature>
<protein>
    <recommendedName>
        <fullName>ABC transporter A family member 8</fullName>
        <shortName>ABC transporter ABCA.8</shortName>
        <shortName>AtABCA8</shortName>
    </recommendedName>
    <alternativeName>
        <fullName>ABC2 homolog 7</fullName>
    </alternativeName>
</protein>
<comment type="subcellular location">
    <subcellularLocation>
        <location evidence="3">Membrane</location>
        <topology evidence="3">Multi-pass membrane protein</topology>
    </subcellularLocation>
</comment>
<comment type="similarity">
    <text evidence="3">Belongs to the ABC transporter superfamily. ABCA family. CPR flippase (TC 3.A.1.211) subfamily.</text>
</comment>
<comment type="sequence caution" evidence="3">
    <conflict type="erroneous gene model prediction">
        <sequence resource="EMBL-CDS" id="CAB41862"/>
    </conflict>
</comment>
<organism>
    <name type="scientific">Arabidopsis thaliana</name>
    <name type="common">Mouse-ear cress</name>
    <dbReference type="NCBI Taxonomy" id="3702"/>
    <lineage>
        <taxon>Eukaryota</taxon>
        <taxon>Viridiplantae</taxon>
        <taxon>Streptophyta</taxon>
        <taxon>Embryophyta</taxon>
        <taxon>Tracheophyta</taxon>
        <taxon>Spermatophyta</taxon>
        <taxon>Magnoliopsida</taxon>
        <taxon>eudicotyledons</taxon>
        <taxon>Gunneridae</taxon>
        <taxon>Pentapetalae</taxon>
        <taxon>rosids</taxon>
        <taxon>malvids</taxon>
        <taxon>Brassicales</taxon>
        <taxon>Brassicaceae</taxon>
        <taxon>Camelineae</taxon>
        <taxon>Arabidopsis</taxon>
    </lineage>
</organism>
<reference key="1">
    <citation type="journal article" date="2000" name="Nature">
        <title>Sequence and analysis of chromosome 3 of the plant Arabidopsis thaliana.</title>
        <authorList>
            <person name="Salanoubat M."/>
            <person name="Lemcke K."/>
            <person name="Rieger M."/>
            <person name="Ansorge W."/>
            <person name="Unseld M."/>
            <person name="Fartmann B."/>
            <person name="Valle G."/>
            <person name="Bloecker H."/>
            <person name="Perez-Alonso M."/>
            <person name="Obermaier B."/>
            <person name="Delseny M."/>
            <person name="Boutry M."/>
            <person name="Grivell L.A."/>
            <person name="Mache R."/>
            <person name="Puigdomenech P."/>
            <person name="De Simone V."/>
            <person name="Choisne N."/>
            <person name="Artiguenave F."/>
            <person name="Robert C."/>
            <person name="Brottier P."/>
            <person name="Wincker P."/>
            <person name="Cattolico L."/>
            <person name="Weissenbach J."/>
            <person name="Saurin W."/>
            <person name="Quetier F."/>
            <person name="Schaefer M."/>
            <person name="Mueller-Auer S."/>
            <person name="Gabel C."/>
            <person name="Fuchs M."/>
            <person name="Benes V."/>
            <person name="Wurmbach E."/>
            <person name="Drzonek H."/>
            <person name="Erfle H."/>
            <person name="Jordan N."/>
            <person name="Bangert S."/>
            <person name="Wiedelmann R."/>
            <person name="Kranz H."/>
            <person name="Voss H."/>
            <person name="Holland R."/>
            <person name="Brandt P."/>
            <person name="Nyakatura G."/>
            <person name="Vezzi A."/>
            <person name="D'Angelo M."/>
            <person name="Pallavicini A."/>
            <person name="Toppo S."/>
            <person name="Simionati B."/>
            <person name="Conrad A."/>
            <person name="Hornischer K."/>
            <person name="Kauer G."/>
            <person name="Loehnert T.-H."/>
            <person name="Nordsiek G."/>
            <person name="Reichelt J."/>
            <person name="Scharfe M."/>
            <person name="Schoen O."/>
            <person name="Bargues M."/>
            <person name="Terol J."/>
            <person name="Climent J."/>
            <person name="Navarro P."/>
            <person name="Collado C."/>
            <person name="Perez-Perez A."/>
            <person name="Ottenwaelder B."/>
            <person name="Duchemin D."/>
            <person name="Cooke R."/>
            <person name="Laudie M."/>
            <person name="Berger-Llauro C."/>
            <person name="Purnelle B."/>
            <person name="Masuy D."/>
            <person name="de Haan M."/>
            <person name="Maarse A.C."/>
            <person name="Alcaraz J.-P."/>
            <person name="Cottet A."/>
            <person name="Casacuberta E."/>
            <person name="Monfort A."/>
            <person name="Argiriou A."/>
            <person name="Flores M."/>
            <person name="Liguori R."/>
            <person name="Vitale D."/>
            <person name="Mannhaupt G."/>
            <person name="Haase D."/>
            <person name="Schoof H."/>
            <person name="Rudd S."/>
            <person name="Zaccaria P."/>
            <person name="Mewes H.-W."/>
            <person name="Mayer K.F.X."/>
            <person name="Kaul S."/>
            <person name="Town C.D."/>
            <person name="Koo H.L."/>
            <person name="Tallon L.J."/>
            <person name="Jenkins J."/>
            <person name="Rooney T."/>
            <person name="Rizzo M."/>
            <person name="Walts A."/>
            <person name="Utterback T."/>
            <person name="Fujii C.Y."/>
            <person name="Shea T.P."/>
            <person name="Creasy T.H."/>
            <person name="Haas B."/>
            <person name="Maiti R."/>
            <person name="Wu D."/>
            <person name="Peterson J."/>
            <person name="Van Aken S."/>
            <person name="Pai G."/>
            <person name="Militscher J."/>
            <person name="Sellers P."/>
            <person name="Gill J.E."/>
            <person name="Feldblyum T.V."/>
            <person name="Preuss D."/>
            <person name="Lin X."/>
            <person name="Nierman W.C."/>
            <person name="Salzberg S.L."/>
            <person name="White O."/>
            <person name="Venter J.C."/>
            <person name="Fraser C.M."/>
            <person name="Kaneko T."/>
            <person name="Nakamura Y."/>
            <person name="Sato S."/>
            <person name="Kato T."/>
            <person name="Asamizu E."/>
            <person name="Sasamoto S."/>
            <person name="Kimura T."/>
            <person name="Idesawa K."/>
            <person name="Kawashima K."/>
            <person name="Kishida Y."/>
            <person name="Kiyokawa C."/>
            <person name="Kohara M."/>
            <person name="Matsumoto M."/>
            <person name="Matsuno A."/>
            <person name="Muraki A."/>
            <person name="Nakayama S."/>
            <person name="Nakazaki N."/>
            <person name="Shinpo S."/>
            <person name="Takeuchi C."/>
            <person name="Wada T."/>
            <person name="Watanabe A."/>
            <person name="Yamada M."/>
            <person name="Yasuda M."/>
            <person name="Tabata S."/>
        </authorList>
    </citation>
    <scope>NUCLEOTIDE SEQUENCE [LARGE SCALE GENOMIC DNA]</scope>
    <source>
        <strain>cv. Columbia</strain>
    </source>
</reference>
<reference key="2">
    <citation type="journal article" date="2017" name="Plant J.">
        <title>Araport11: a complete reannotation of the Arabidopsis thaliana reference genome.</title>
        <authorList>
            <person name="Cheng C.Y."/>
            <person name="Krishnakumar V."/>
            <person name="Chan A.P."/>
            <person name="Thibaud-Nissen F."/>
            <person name="Schobel S."/>
            <person name="Town C.D."/>
        </authorList>
    </citation>
    <scope>GENOME REANNOTATION</scope>
    <source>
        <strain>cv. Columbia</strain>
    </source>
</reference>
<reference key="3">
    <citation type="journal article" date="2003" name="Science">
        <title>Empirical analysis of transcriptional activity in the Arabidopsis genome.</title>
        <authorList>
            <person name="Yamada K."/>
            <person name="Lim J."/>
            <person name="Dale J.M."/>
            <person name="Chen H."/>
            <person name="Shinn P."/>
            <person name="Palm C.J."/>
            <person name="Southwick A.M."/>
            <person name="Wu H.C."/>
            <person name="Kim C.J."/>
            <person name="Nguyen M."/>
            <person name="Pham P.K."/>
            <person name="Cheuk R.F."/>
            <person name="Karlin-Newmann G."/>
            <person name="Liu S.X."/>
            <person name="Lam B."/>
            <person name="Sakano H."/>
            <person name="Wu T."/>
            <person name="Yu G."/>
            <person name="Miranda M."/>
            <person name="Quach H.L."/>
            <person name="Tripp M."/>
            <person name="Chang C.H."/>
            <person name="Lee J.M."/>
            <person name="Toriumi M.J."/>
            <person name="Chan M.M."/>
            <person name="Tang C.C."/>
            <person name="Onodera C.S."/>
            <person name="Deng J.M."/>
            <person name="Akiyama K."/>
            <person name="Ansari Y."/>
            <person name="Arakawa T."/>
            <person name="Banh J."/>
            <person name="Banno F."/>
            <person name="Bowser L."/>
            <person name="Brooks S.Y."/>
            <person name="Carninci P."/>
            <person name="Chao Q."/>
            <person name="Choy N."/>
            <person name="Enju A."/>
            <person name="Goldsmith A.D."/>
            <person name="Gurjal M."/>
            <person name="Hansen N.F."/>
            <person name="Hayashizaki Y."/>
            <person name="Johnson-Hopson C."/>
            <person name="Hsuan V.W."/>
            <person name="Iida K."/>
            <person name="Karnes M."/>
            <person name="Khan S."/>
            <person name="Koesema E."/>
            <person name="Ishida J."/>
            <person name="Jiang P.X."/>
            <person name="Jones T."/>
            <person name="Kawai J."/>
            <person name="Kamiya A."/>
            <person name="Meyers C."/>
            <person name="Nakajima M."/>
            <person name="Narusaka M."/>
            <person name="Seki M."/>
            <person name="Sakurai T."/>
            <person name="Satou M."/>
            <person name="Tamse R."/>
            <person name="Vaysberg M."/>
            <person name="Wallender E.K."/>
            <person name="Wong C."/>
            <person name="Yamamura Y."/>
            <person name="Yuan S."/>
            <person name="Shinozaki K."/>
            <person name="Davis R.W."/>
            <person name="Theologis A."/>
            <person name="Ecker J.R."/>
        </authorList>
    </citation>
    <scope>NUCLEOTIDE SEQUENCE [LARGE SCALE MRNA]</scope>
    <source>
        <strain>cv. Columbia</strain>
    </source>
</reference>
<reference key="4">
    <citation type="journal article" date="2001" name="J. Biol. Chem.">
        <title>The Arabidopsis thaliana ABC protein superfamily, a complete inventory.</title>
        <authorList>
            <person name="Sanchez-Fernandez R."/>
            <person name="Davies T.G."/>
            <person name="Coleman J.O."/>
            <person name="Rea P.A."/>
        </authorList>
    </citation>
    <scope>GENE FAMILY</scope>
    <scope>NOMENCLATURE</scope>
</reference>
<reference key="5">
    <citation type="journal article" date="2008" name="Trends Plant Sci.">
        <title>Plant ABC proteins - a unified nomenclature and updated inventory.</title>
        <authorList>
            <person name="Verrier P.J."/>
            <person name="Bird D."/>
            <person name="Burla B."/>
            <person name="Dassa E."/>
            <person name="Forestier C."/>
            <person name="Geisler M."/>
            <person name="Klein M."/>
            <person name="Kolukisaoglu H.U."/>
            <person name="Lee Y."/>
            <person name="Martinoia E."/>
            <person name="Murphy A."/>
            <person name="Rea P.A."/>
            <person name="Samuels L."/>
            <person name="Schulz B."/>
            <person name="Spalding E.J."/>
            <person name="Yazaki K."/>
            <person name="Theodoulou F.L."/>
        </authorList>
    </citation>
    <scope>GENE FAMILY</scope>
    <scope>NOMENCLATURE</scope>
</reference>
<gene>
    <name type="primary">ABCA8</name>
    <name type="synonym">ATH7</name>
    <name type="ordered locus">At3g47790</name>
    <name type="ORF">T23J7.120</name>
</gene>
<name>AB8A_ARATH</name>
<dbReference type="EMBL" id="AL049746">
    <property type="protein sequence ID" value="CAB41862.1"/>
    <property type="status" value="ALT_SEQ"/>
    <property type="molecule type" value="Genomic_DNA"/>
</dbReference>
<dbReference type="EMBL" id="CP002686">
    <property type="protein sequence ID" value="AEE78329.1"/>
    <property type="molecule type" value="Genomic_DNA"/>
</dbReference>
<dbReference type="EMBL" id="AY099665">
    <property type="protein sequence ID" value="AAM20516.1"/>
    <property type="molecule type" value="mRNA"/>
</dbReference>
<dbReference type="PIR" id="T07718">
    <property type="entry name" value="T07718"/>
</dbReference>
<dbReference type="RefSeq" id="NP_190363.3">
    <property type="nucleotide sequence ID" value="NM_114647.4"/>
</dbReference>
<dbReference type="SMR" id="Q8LPK0"/>
<dbReference type="FunCoup" id="Q8LPK0">
    <property type="interactions" value="7"/>
</dbReference>
<dbReference type="STRING" id="3702.Q8LPK0"/>
<dbReference type="PaxDb" id="3702-AT3G47790.1"/>
<dbReference type="ProteomicsDB" id="244617"/>
<dbReference type="EnsemblPlants" id="AT3G47790.1">
    <property type="protein sequence ID" value="AT3G47790.1"/>
    <property type="gene ID" value="AT3G47790"/>
</dbReference>
<dbReference type="GeneID" id="823933"/>
<dbReference type="Gramene" id="AT3G47790.1">
    <property type="protein sequence ID" value="AT3G47790.1"/>
    <property type="gene ID" value="AT3G47790"/>
</dbReference>
<dbReference type="KEGG" id="ath:AT3G47790"/>
<dbReference type="Araport" id="AT3G47790"/>
<dbReference type="TAIR" id="AT3G47790">
    <property type="gene designation" value="ABCA8"/>
</dbReference>
<dbReference type="eggNOG" id="KOG0059">
    <property type="taxonomic scope" value="Eukaryota"/>
</dbReference>
<dbReference type="HOGENOM" id="CLU_000604_19_5_1"/>
<dbReference type="InParanoid" id="Q8LPK0"/>
<dbReference type="OMA" id="EQLVHNI"/>
<dbReference type="BioCyc" id="ARA:AT3G47790-MONOMER"/>
<dbReference type="PRO" id="PR:Q8LPK0"/>
<dbReference type="Proteomes" id="UP000006548">
    <property type="component" value="Chromosome 3"/>
</dbReference>
<dbReference type="ExpressionAtlas" id="Q8LPK0">
    <property type="expression patterns" value="baseline and differential"/>
</dbReference>
<dbReference type="GO" id="GO:0016020">
    <property type="term" value="C:membrane"/>
    <property type="evidence" value="ECO:0007669"/>
    <property type="project" value="UniProtKB-SubCell"/>
</dbReference>
<dbReference type="GO" id="GO:0140359">
    <property type="term" value="F:ABC-type transporter activity"/>
    <property type="evidence" value="ECO:0007669"/>
    <property type="project" value="InterPro"/>
</dbReference>
<dbReference type="GO" id="GO:0005524">
    <property type="term" value="F:ATP binding"/>
    <property type="evidence" value="ECO:0007669"/>
    <property type="project" value="UniProtKB-KW"/>
</dbReference>
<dbReference type="GO" id="GO:0016887">
    <property type="term" value="F:ATP hydrolysis activity"/>
    <property type="evidence" value="ECO:0007669"/>
    <property type="project" value="InterPro"/>
</dbReference>
<dbReference type="CDD" id="cd03263">
    <property type="entry name" value="ABC_subfamily_A"/>
    <property type="match status" value="1"/>
</dbReference>
<dbReference type="FunFam" id="3.40.50.300:FF:000633">
    <property type="entry name" value="ABC transporter A family member 7"/>
    <property type="match status" value="1"/>
</dbReference>
<dbReference type="Gene3D" id="3.40.50.300">
    <property type="entry name" value="P-loop containing nucleotide triphosphate hydrolases"/>
    <property type="match status" value="1"/>
</dbReference>
<dbReference type="InterPro" id="IPR003593">
    <property type="entry name" value="AAA+_ATPase"/>
</dbReference>
<dbReference type="InterPro" id="IPR013525">
    <property type="entry name" value="ABC2_TM"/>
</dbReference>
<dbReference type="InterPro" id="IPR003439">
    <property type="entry name" value="ABC_transporter-like_ATP-bd"/>
</dbReference>
<dbReference type="InterPro" id="IPR017871">
    <property type="entry name" value="ABC_transporter-like_CS"/>
</dbReference>
<dbReference type="InterPro" id="IPR026082">
    <property type="entry name" value="ABCA"/>
</dbReference>
<dbReference type="InterPro" id="IPR027417">
    <property type="entry name" value="P-loop_NTPase"/>
</dbReference>
<dbReference type="PANTHER" id="PTHR19229:SF215">
    <property type="entry name" value="ABC TRANSPORTER A FAMILY MEMBER 8"/>
    <property type="match status" value="1"/>
</dbReference>
<dbReference type="PANTHER" id="PTHR19229">
    <property type="entry name" value="ATP-BINDING CASSETTE TRANSPORTER SUBFAMILY A ABCA"/>
    <property type="match status" value="1"/>
</dbReference>
<dbReference type="Pfam" id="PF12698">
    <property type="entry name" value="ABC2_membrane_3"/>
    <property type="match status" value="1"/>
</dbReference>
<dbReference type="Pfam" id="PF00005">
    <property type="entry name" value="ABC_tran"/>
    <property type="match status" value="1"/>
</dbReference>
<dbReference type="Pfam" id="PF24526">
    <property type="entry name" value="ABCA12_C"/>
    <property type="match status" value="1"/>
</dbReference>
<dbReference type="SMART" id="SM00382">
    <property type="entry name" value="AAA"/>
    <property type="match status" value="1"/>
</dbReference>
<dbReference type="SUPFAM" id="SSF52540">
    <property type="entry name" value="P-loop containing nucleoside triphosphate hydrolases"/>
    <property type="match status" value="1"/>
</dbReference>
<dbReference type="PROSITE" id="PS00211">
    <property type="entry name" value="ABC_TRANSPORTER_1"/>
    <property type="match status" value="1"/>
</dbReference>
<dbReference type="PROSITE" id="PS50893">
    <property type="entry name" value="ABC_TRANSPORTER_2"/>
    <property type="match status" value="1"/>
</dbReference>